<comment type="function">
    <text evidence="4">May play a role in apoptosis. Does not appear to show pro-apoptotic activity when expressed ectopically in early embryos.</text>
</comment>
<comment type="subcellular location">
    <subcellularLocation>
        <location evidence="2">Membrane</location>
        <topology evidence="1">Single-pass membrane protein</topology>
    </subcellularLocation>
</comment>
<comment type="tissue specificity">
    <text evidence="4">Expressed strongly in ovary and more weakly in eye. Little expression in other tissues examined.</text>
</comment>
<comment type="developmental stage">
    <text evidence="4">Expressed maternally but largely absent later in embryonic development. Also expressed in adult.</text>
</comment>
<comment type="similarity">
    <text evidence="6">Belongs to the Bcl-2 family.</text>
</comment>
<gene>
    <name type="primary">bokb</name>
    <name type="synonym">bok</name>
    <name type="ORF">zgc:64041</name>
</gene>
<dbReference type="EMBL" id="DQ860157">
    <property type="protein sequence ID" value="ABI18128.1"/>
    <property type="molecule type" value="mRNA"/>
</dbReference>
<dbReference type="EMBL" id="BC053218">
    <property type="protein sequence ID" value="AAH53218.1"/>
    <property type="molecule type" value="mRNA"/>
</dbReference>
<dbReference type="RefSeq" id="NP_957479.1">
    <property type="nucleotide sequence ID" value="NM_201185.1"/>
</dbReference>
<dbReference type="SMR" id="Q7T381"/>
<dbReference type="FunCoup" id="Q7T381">
    <property type="interactions" value="7"/>
</dbReference>
<dbReference type="STRING" id="7955.ENSDARP00000123352"/>
<dbReference type="PaxDb" id="7955-ENSDARP00000123352"/>
<dbReference type="DNASU" id="394160"/>
<dbReference type="GeneID" id="394160"/>
<dbReference type="KEGG" id="dre:394160"/>
<dbReference type="AGR" id="ZFIN:ZDB-GENE-040426-1346"/>
<dbReference type="CTD" id="394160"/>
<dbReference type="ZFIN" id="ZDB-GENE-040426-1346">
    <property type="gene designation" value="bokb"/>
</dbReference>
<dbReference type="eggNOG" id="KOG4728">
    <property type="taxonomic scope" value="Eukaryota"/>
</dbReference>
<dbReference type="InParanoid" id="Q7T381"/>
<dbReference type="OrthoDB" id="5947850at2759"/>
<dbReference type="ChiTaRS" id="boka">
    <property type="organism name" value="zebrafish"/>
</dbReference>
<dbReference type="PRO" id="PR:Q7T381"/>
<dbReference type="Proteomes" id="UP000000437">
    <property type="component" value="Chromosome 2"/>
</dbReference>
<dbReference type="GO" id="GO:0005741">
    <property type="term" value="C:mitochondrial outer membrane"/>
    <property type="evidence" value="ECO:0000318"/>
    <property type="project" value="GO_Central"/>
</dbReference>
<dbReference type="GO" id="GO:0015267">
    <property type="term" value="F:channel activity"/>
    <property type="evidence" value="ECO:0000318"/>
    <property type="project" value="GO_Central"/>
</dbReference>
<dbReference type="GO" id="GO:0006915">
    <property type="term" value="P:apoptotic process"/>
    <property type="evidence" value="ECO:0007669"/>
    <property type="project" value="UniProtKB-KW"/>
</dbReference>
<dbReference type="GO" id="GO:0042981">
    <property type="term" value="P:regulation of apoptotic process"/>
    <property type="evidence" value="ECO:0007669"/>
    <property type="project" value="InterPro"/>
</dbReference>
<dbReference type="CDD" id="cd06845">
    <property type="entry name" value="Bcl-2_like"/>
    <property type="match status" value="1"/>
</dbReference>
<dbReference type="Gene3D" id="1.10.437.10">
    <property type="entry name" value="Blc2-like"/>
    <property type="match status" value="1"/>
</dbReference>
<dbReference type="InterPro" id="IPR036834">
    <property type="entry name" value="Bcl-2-like_sf"/>
</dbReference>
<dbReference type="InterPro" id="IPR046371">
    <property type="entry name" value="Bcl-2_BH1-3"/>
</dbReference>
<dbReference type="InterPro" id="IPR026298">
    <property type="entry name" value="Bcl-2_fam"/>
</dbReference>
<dbReference type="InterPro" id="IPR002475">
    <property type="entry name" value="Bcl2-like"/>
</dbReference>
<dbReference type="InterPro" id="IPR003093">
    <property type="entry name" value="Bcl2_BH4"/>
</dbReference>
<dbReference type="PANTHER" id="PTHR11256">
    <property type="entry name" value="BCL-2 RELATED"/>
    <property type="match status" value="1"/>
</dbReference>
<dbReference type="PANTHER" id="PTHR11256:SF48">
    <property type="entry name" value="BCL-2-RELATED OVARIAN KILLER PROTEIN"/>
    <property type="match status" value="1"/>
</dbReference>
<dbReference type="Pfam" id="PF00452">
    <property type="entry name" value="Bcl-2"/>
    <property type="match status" value="1"/>
</dbReference>
<dbReference type="PRINTS" id="PR01862">
    <property type="entry name" value="BCL2FAMILY"/>
</dbReference>
<dbReference type="SMART" id="SM00337">
    <property type="entry name" value="BCL"/>
    <property type="match status" value="1"/>
</dbReference>
<dbReference type="SUPFAM" id="SSF56854">
    <property type="entry name" value="Bcl-2 inhibitors of programmed cell death"/>
    <property type="match status" value="1"/>
</dbReference>
<dbReference type="PROSITE" id="PS50062">
    <property type="entry name" value="BCL2_FAMILY"/>
    <property type="match status" value="1"/>
</dbReference>
<dbReference type="PROSITE" id="PS50063">
    <property type="entry name" value="BH4_2"/>
    <property type="match status" value="1"/>
</dbReference>
<accession>Q7T381</accession>
<accession>Q0GKC3</accession>
<evidence type="ECO:0000250" key="1">
    <source>
        <dbReference type="UniProtKB" id="O35425"/>
    </source>
</evidence>
<evidence type="ECO:0000250" key="2">
    <source>
        <dbReference type="UniProtKB" id="Q9UMX3"/>
    </source>
</evidence>
<evidence type="ECO:0000255" key="3"/>
<evidence type="ECO:0000269" key="4">
    <source>
    </source>
</evidence>
<evidence type="ECO:0000303" key="5">
    <source>
    </source>
</evidence>
<evidence type="ECO:0000305" key="6"/>
<keyword id="KW-0053">Apoptosis</keyword>
<keyword id="KW-0472">Membrane</keyword>
<keyword id="KW-1185">Reference proteome</keyword>
<keyword id="KW-0812">Transmembrane</keyword>
<keyword id="KW-1133">Transmembrane helix</keyword>
<sequence length="211" mass="23834">MNVFARSSVLAAEMIDVFDRTHTEKELVFQSKELCRDFIHSRITREGLSWSKVELDLPEPRGVLVDVSVVLLKLGDELECMRPYVYRNIAKQLNISVSVEAVVSDAFLSVATEVIAMGITWGKVVAIYAVAAGLAVDCVRLGHPVMVHTIVDSLGEFVRRSLVPWLKKRGGWVDILKCVVNMDSRAHVHWLSTAVLTWREFIKTMYVYLTK</sequence>
<name>BOKB_DANRE</name>
<protein>
    <recommendedName>
        <fullName evidence="6">Bcl-2-related ovarian killer protein homolog B</fullName>
        <shortName evidence="5">zBok2</shortName>
    </recommendedName>
</protein>
<proteinExistence type="evidence at transcript level"/>
<reference key="1">
    <citation type="journal article" date="2006" name="Cell Death Differ.">
        <title>Functional characterization of the Bcl-2 gene family in the zebrafish.</title>
        <authorList>
            <person name="Kratz E."/>
            <person name="Eimon P.M."/>
            <person name="Mukhyala K."/>
            <person name="Stern H."/>
            <person name="Zha J."/>
            <person name="Strasser A."/>
            <person name="Hart R."/>
            <person name="Ashkenazi A."/>
        </authorList>
    </citation>
    <scope>NUCLEOTIDE SEQUENCE [MRNA]</scope>
    <scope>FUNCTION</scope>
    <scope>DEVELOPMENTAL STAGE</scope>
    <scope>TISSUE SPECIFICITY</scope>
</reference>
<reference key="2">
    <citation type="submission" date="2004-02" db="EMBL/GenBank/DDBJ databases">
        <authorList>
            <consortium name="NIH - Zebrafish Gene Collection (ZGC) project"/>
        </authorList>
    </citation>
    <scope>NUCLEOTIDE SEQUENCE [LARGE SCALE MRNA]</scope>
    <source>
        <tissue>Kidney</tissue>
    </source>
</reference>
<feature type="chain" id="PRO_0000143090" description="Bcl-2-related ovarian killer protein homolog B">
    <location>
        <begin position="1"/>
        <end position="211"/>
    </location>
</feature>
<feature type="transmembrane region" description="Helical" evidence="3">
    <location>
        <begin position="190"/>
        <end position="210"/>
    </location>
</feature>
<feature type="short sequence motif" description="BH4">
    <location>
        <begin position="32"/>
        <end position="44"/>
    </location>
</feature>
<feature type="short sequence motif" description="BH3">
    <location>
        <begin position="67"/>
        <end position="83"/>
    </location>
</feature>
<feature type="short sequence motif" description="BH1">
    <location>
        <begin position="113"/>
        <end position="132"/>
    </location>
</feature>
<feature type="short sequence motif" description="BH2">
    <location>
        <begin position="165"/>
        <end position="179"/>
    </location>
</feature>
<organism>
    <name type="scientific">Danio rerio</name>
    <name type="common">Zebrafish</name>
    <name type="synonym">Brachydanio rerio</name>
    <dbReference type="NCBI Taxonomy" id="7955"/>
    <lineage>
        <taxon>Eukaryota</taxon>
        <taxon>Metazoa</taxon>
        <taxon>Chordata</taxon>
        <taxon>Craniata</taxon>
        <taxon>Vertebrata</taxon>
        <taxon>Euteleostomi</taxon>
        <taxon>Actinopterygii</taxon>
        <taxon>Neopterygii</taxon>
        <taxon>Teleostei</taxon>
        <taxon>Ostariophysi</taxon>
        <taxon>Cypriniformes</taxon>
        <taxon>Danionidae</taxon>
        <taxon>Danioninae</taxon>
        <taxon>Danio</taxon>
    </lineage>
</organism>